<gene>
    <name evidence="1" type="primary">eno</name>
    <name type="ordered locus">SbBS512_E3094</name>
</gene>
<proteinExistence type="inferred from homology"/>
<evidence type="ECO:0000255" key="1">
    <source>
        <dbReference type="HAMAP-Rule" id="MF_00318"/>
    </source>
</evidence>
<dbReference type="EC" id="4.2.1.11" evidence="1"/>
<dbReference type="EMBL" id="CP001063">
    <property type="protein sequence ID" value="ACD10034.1"/>
    <property type="molecule type" value="Genomic_DNA"/>
</dbReference>
<dbReference type="RefSeq" id="WP_000036723.1">
    <property type="nucleotide sequence ID" value="NC_010658.1"/>
</dbReference>
<dbReference type="SMR" id="B2TZF4"/>
<dbReference type="STRING" id="344609.SbBS512_E3094"/>
<dbReference type="GeneID" id="93779219"/>
<dbReference type="KEGG" id="sbc:SbBS512_E3094"/>
<dbReference type="HOGENOM" id="CLU_031223_2_1_6"/>
<dbReference type="UniPathway" id="UPA00109">
    <property type="reaction ID" value="UER00187"/>
</dbReference>
<dbReference type="Proteomes" id="UP000001030">
    <property type="component" value="Chromosome"/>
</dbReference>
<dbReference type="GO" id="GO:0009986">
    <property type="term" value="C:cell surface"/>
    <property type="evidence" value="ECO:0007669"/>
    <property type="project" value="UniProtKB-SubCell"/>
</dbReference>
<dbReference type="GO" id="GO:0005576">
    <property type="term" value="C:extracellular region"/>
    <property type="evidence" value="ECO:0007669"/>
    <property type="project" value="UniProtKB-SubCell"/>
</dbReference>
<dbReference type="GO" id="GO:0000015">
    <property type="term" value="C:phosphopyruvate hydratase complex"/>
    <property type="evidence" value="ECO:0007669"/>
    <property type="project" value="InterPro"/>
</dbReference>
<dbReference type="GO" id="GO:0000287">
    <property type="term" value="F:magnesium ion binding"/>
    <property type="evidence" value="ECO:0007669"/>
    <property type="project" value="UniProtKB-UniRule"/>
</dbReference>
<dbReference type="GO" id="GO:0004634">
    <property type="term" value="F:phosphopyruvate hydratase activity"/>
    <property type="evidence" value="ECO:0007669"/>
    <property type="project" value="UniProtKB-UniRule"/>
</dbReference>
<dbReference type="GO" id="GO:0006096">
    <property type="term" value="P:glycolytic process"/>
    <property type="evidence" value="ECO:0007669"/>
    <property type="project" value="UniProtKB-UniRule"/>
</dbReference>
<dbReference type="CDD" id="cd03313">
    <property type="entry name" value="enolase"/>
    <property type="match status" value="1"/>
</dbReference>
<dbReference type="FunFam" id="3.20.20.120:FF:000001">
    <property type="entry name" value="Enolase"/>
    <property type="match status" value="1"/>
</dbReference>
<dbReference type="FunFam" id="3.30.390.10:FF:000001">
    <property type="entry name" value="Enolase"/>
    <property type="match status" value="1"/>
</dbReference>
<dbReference type="Gene3D" id="3.20.20.120">
    <property type="entry name" value="Enolase-like C-terminal domain"/>
    <property type="match status" value="1"/>
</dbReference>
<dbReference type="Gene3D" id="3.30.390.10">
    <property type="entry name" value="Enolase-like, N-terminal domain"/>
    <property type="match status" value="1"/>
</dbReference>
<dbReference type="HAMAP" id="MF_00318">
    <property type="entry name" value="Enolase"/>
    <property type="match status" value="1"/>
</dbReference>
<dbReference type="InterPro" id="IPR000941">
    <property type="entry name" value="Enolase"/>
</dbReference>
<dbReference type="InterPro" id="IPR036849">
    <property type="entry name" value="Enolase-like_C_sf"/>
</dbReference>
<dbReference type="InterPro" id="IPR029017">
    <property type="entry name" value="Enolase-like_N"/>
</dbReference>
<dbReference type="InterPro" id="IPR020810">
    <property type="entry name" value="Enolase_C"/>
</dbReference>
<dbReference type="InterPro" id="IPR020809">
    <property type="entry name" value="Enolase_CS"/>
</dbReference>
<dbReference type="InterPro" id="IPR020811">
    <property type="entry name" value="Enolase_N"/>
</dbReference>
<dbReference type="NCBIfam" id="TIGR01060">
    <property type="entry name" value="eno"/>
    <property type="match status" value="1"/>
</dbReference>
<dbReference type="PANTHER" id="PTHR11902">
    <property type="entry name" value="ENOLASE"/>
    <property type="match status" value="1"/>
</dbReference>
<dbReference type="PANTHER" id="PTHR11902:SF1">
    <property type="entry name" value="ENOLASE"/>
    <property type="match status" value="1"/>
</dbReference>
<dbReference type="Pfam" id="PF00113">
    <property type="entry name" value="Enolase_C"/>
    <property type="match status" value="1"/>
</dbReference>
<dbReference type="Pfam" id="PF03952">
    <property type="entry name" value="Enolase_N"/>
    <property type="match status" value="1"/>
</dbReference>
<dbReference type="PIRSF" id="PIRSF001400">
    <property type="entry name" value="Enolase"/>
    <property type="match status" value="1"/>
</dbReference>
<dbReference type="PRINTS" id="PR00148">
    <property type="entry name" value="ENOLASE"/>
</dbReference>
<dbReference type="SFLD" id="SFLDS00001">
    <property type="entry name" value="Enolase"/>
    <property type="match status" value="1"/>
</dbReference>
<dbReference type="SFLD" id="SFLDF00002">
    <property type="entry name" value="enolase"/>
    <property type="match status" value="1"/>
</dbReference>
<dbReference type="SMART" id="SM01192">
    <property type="entry name" value="Enolase_C"/>
    <property type="match status" value="1"/>
</dbReference>
<dbReference type="SMART" id="SM01193">
    <property type="entry name" value="Enolase_N"/>
    <property type="match status" value="1"/>
</dbReference>
<dbReference type="SUPFAM" id="SSF51604">
    <property type="entry name" value="Enolase C-terminal domain-like"/>
    <property type="match status" value="1"/>
</dbReference>
<dbReference type="SUPFAM" id="SSF54826">
    <property type="entry name" value="Enolase N-terminal domain-like"/>
    <property type="match status" value="1"/>
</dbReference>
<dbReference type="PROSITE" id="PS00164">
    <property type="entry name" value="ENOLASE"/>
    <property type="match status" value="1"/>
</dbReference>
<feature type="chain" id="PRO_1000115915" description="Enolase">
    <location>
        <begin position="1"/>
        <end position="432"/>
    </location>
</feature>
<feature type="active site" description="Proton donor" evidence="1">
    <location>
        <position position="209"/>
    </location>
</feature>
<feature type="active site" description="Proton acceptor" evidence="1">
    <location>
        <position position="342"/>
    </location>
</feature>
<feature type="binding site" evidence="1">
    <location>
        <position position="167"/>
    </location>
    <ligand>
        <name>(2R)-2-phosphoglycerate</name>
        <dbReference type="ChEBI" id="CHEBI:58289"/>
    </ligand>
</feature>
<feature type="binding site" evidence="1">
    <location>
        <position position="246"/>
    </location>
    <ligand>
        <name>Mg(2+)</name>
        <dbReference type="ChEBI" id="CHEBI:18420"/>
    </ligand>
</feature>
<feature type="binding site" evidence="1">
    <location>
        <position position="290"/>
    </location>
    <ligand>
        <name>Mg(2+)</name>
        <dbReference type="ChEBI" id="CHEBI:18420"/>
    </ligand>
</feature>
<feature type="binding site" evidence="1">
    <location>
        <position position="317"/>
    </location>
    <ligand>
        <name>Mg(2+)</name>
        <dbReference type="ChEBI" id="CHEBI:18420"/>
    </ligand>
</feature>
<feature type="binding site" evidence="1">
    <location>
        <position position="342"/>
    </location>
    <ligand>
        <name>(2R)-2-phosphoglycerate</name>
        <dbReference type="ChEBI" id="CHEBI:58289"/>
    </ligand>
</feature>
<feature type="binding site" evidence="1">
    <location>
        <position position="371"/>
    </location>
    <ligand>
        <name>(2R)-2-phosphoglycerate</name>
        <dbReference type="ChEBI" id="CHEBI:58289"/>
    </ligand>
</feature>
<feature type="binding site" evidence="1">
    <location>
        <position position="372"/>
    </location>
    <ligand>
        <name>(2R)-2-phosphoglycerate</name>
        <dbReference type="ChEBI" id="CHEBI:58289"/>
    </ligand>
</feature>
<feature type="binding site" evidence="1">
    <location>
        <position position="393"/>
    </location>
    <ligand>
        <name>(2R)-2-phosphoglycerate</name>
        <dbReference type="ChEBI" id="CHEBI:58289"/>
    </ligand>
</feature>
<organism>
    <name type="scientific">Shigella boydii serotype 18 (strain CDC 3083-94 / BS512)</name>
    <dbReference type="NCBI Taxonomy" id="344609"/>
    <lineage>
        <taxon>Bacteria</taxon>
        <taxon>Pseudomonadati</taxon>
        <taxon>Pseudomonadota</taxon>
        <taxon>Gammaproteobacteria</taxon>
        <taxon>Enterobacterales</taxon>
        <taxon>Enterobacteriaceae</taxon>
        <taxon>Shigella</taxon>
    </lineage>
</organism>
<reference key="1">
    <citation type="submission" date="2008-05" db="EMBL/GenBank/DDBJ databases">
        <title>Complete sequence of Shigella boydii serotype 18 strain BS512.</title>
        <authorList>
            <person name="Rasko D.A."/>
            <person name="Rosovitz M."/>
            <person name="Maurelli A.T."/>
            <person name="Myers G."/>
            <person name="Seshadri R."/>
            <person name="Cer R."/>
            <person name="Jiang L."/>
            <person name="Ravel J."/>
            <person name="Sebastian Y."/>
        </authorList>
    </citation>
    <scope>NUCLEOTIDE SEQUENCE [LARGE SCALE GENOMIC DNA]</scope>
    <source>
        <strain>CDC 3083-94 / BS512</strain>
    </source>
</reference>
<comment type="function">
    <text evidence="1">Catalyzes the reversible conversion of 2-phosphoglycerate (2-PG) into phosphoenolpyruvate (PEP). It is essential for the degradation of carbohydrates via glycolysis.</text>
</comment>
<comment type="catalytic activity">
    <reaction evidence="1">
        <text>(2R)-2-phosphoglycerate = phosphoenolpyruvate + H2O</text>
        <dbReference type="Rhea" id="RHEA:10164"/>
        <dbReference type="ChEBI" id="CHEBI:15377"/>
        <dbReference type="ChEBI" id="CHEBI:58289"/>
        <dbReference type="ChEBI" id="CHEBI:58702"/>
        <dbReference type="EC" id="4.2.1.11"/>
    </reaction>
</comment>
<comment type="cofactor">
    <cofactor evidence="1">
        <name>Mg(2+)</name>
        <dbReference type="ChEBI" id="CHEBI:18420"/>
    </cofactor>
    <text evidence="1">Binds a second Mg(2+) ion via substrate during catalysis.</text>
</comment>
<comment type="pathway">
    <text evidence="1">Carbohydrate degradation; glycolysis; pyruvate from D-glyceraldehyde 3-phosphate: step 4/5.</text>
</comment>
<comment type="subunit">
    <text evidence="1">Component of the RNA degradosome, a multiprotein complex involved in RNA processing and mRNA degradation.</text>
</comment>
<comment type="subcellular location">
    <subcellularLocation>
        <location evidence="1">Cytoplasm</location>
    </subcellularLocation>
    <subcellularLocation>
        <location evidence="1">Secreted</location>
    </subcellularLocation>
    <subcellularLocation>
        <location evidence="1">Cell surface</location>
    </subcellularLocation>
    <text evidence="1">Fractions of enolase are present in both the cytoplasm and on the cell surface.</text>
</comment>
<comment type="similarity">
    <text evidence="1">Belongs to the enolase family.</text>
</comment>
<keyword id="KW-0963">Cytoplasm</keyword>
<keyword id="KW-0324">Glycolysis</keyword>
<keyword id="KW-0456">Lyase</keyword>
<keyword id="KW-0460">Magnesium</keyword>
<keyword id="KW-0479">Metal-binding</keyword>
<keyword id="KW-1185">Reference proteome</keyword>
<keyword id="KW-0964">Secreted</keyword>
<sequence>MSKIVKIIGREIIDSRGNPTVEAEVHLEGGFVGMAAAPSGASTGSREALELRDGDKSRFLGKGVTKAVAAVNGPIAQALIGKDAKDQAGIDKIMIDLDGTENKSKFGANAILAVSLANAKAAAAAKGMPLYEHIAELNGTPGKYSMPVPMMNIINGGEHADNNVDIQEFMIQPVGAKTVKEAIRMGSEVFHHLAKVLKAKGMNTAVGDEGGYAPNLGSNAEALAVIAEAVKAAGYELGKDITLAMDCAASEFYKDGKYVLAGEGNKAFTSEEFTHFLEELTKQYPIVSIEDGLDESDWDGFAYQTKVLGDKIQLVGDDLFVTNTKILKEGIEKGIANSILIKFNQIGSLTETLAAIKMAKDAGYTAVISHRSGETEDATIADLAVGTAAGQIKTGSMSRSDRVAKYNQLIRIEEALGEKAPYNGRKEIKGQA</sequence>
<protein>
    <recommendedName>
        <fullName evidence="1">Enolase</fullName>
        <ecNumber evidence="1">4.2.1.11</ecNumber>
    </recommendedName>
    <alternativeName>
        <fullName evidence="1">2-phospho-D-glycerate hydro-lyase</fullName>
    </alternativeName>
    <alternativeName>
        <fullName evidence="1">2-phosphoglycerate dehydratase</fullName>
    </alternativeName>
</protein>
<name>ENO_SHIB3</name>
<accession>B2TZF4</accession>